<keyword id="KW-0521">NADP</keyword>
<keyword id="KW-0560">Oxidoreductase</keyword>
<keyword id="KW-0627">Porphyrin biosynthesis</keyword>
<proteinExistence type="inferred from homology"/>
<organism>
    <name type="scientific">Psychrobacter cryohalolentis (strain ATCC BAA-1226 / DSM 17306 / VKM B-2378 / K5)</name>
    <dbReference type="NCBI Taxonomy" id="335284"/>
    <lineage>
        <taxon>Bacteria</taxon>
        <taxon>Pseudomonadati</taxon>
        <taxon>Pseudomonadota</taxon>
        <taxon>Gammaproteobacteria</taxon>
        <taxon>Moraxellales</taxon>
        <taxon>Moraxellaceae</taxon>
        <taxon>Psychrobacter</taxon>
    </lineage>
</organism>
<evidence type="ECO:0000255" key="1">
    <source>
        <dbReference type="HAMAP-Rule" id="MF_00087"/>
    </source>
</evidence>
<gene>
    <name evidence="1" type="primary">hemA</name>
    <name type="ordered locus">Pcryo_0189</name>
</gene>
<comment type="function">
    <text evidence="1">Catalyzes the NADPH-dependent reduction of glutamyl-tRNA(Glu) to glutamate 1-semialdehyde (GSA).</text>
</comment>
<comment type="catalytic activity">
    <reaction evidence="1">
        <text>(S)-4-amino-5-oxopentanoate + tRNA(Glu) + NADP(+) = L-glutamyl-tRNA(Glu) + NADPH + H(+)</text>
        <dbReference type="Rhea" id="RHEA:12344"/>
        <dbReference type="Rhea" id="RHEA-COMP:9663"/>
        <dbReference type="Rhea" id="RHEA-COMP:9680"/>
        <dbReference type="ChEBI" id="CHEBI:15378"/>
        <dbReference type="ChEBI" id="CHEBI:57501"/>
        <dbReference type="ChEBI" id="CHEBI:57783"/>
        <dbReference type="ChEBI" id="CHEBI:58349"/>
        <dbReference type="ChEBI" id="CHEBI:78442"/>
        <dbReference type="ChEBI" id="CHEBI:78520"/>
        <dbReference type="EC" id="1.2.1.70"/>
    </reaction>
</comment>
<comment type="pathway">
    <text evidence="1">Porphyrin-containing compound metabolism; protoporphyrin-IX biosynthesis; 5-aminolevulinate from L-glutamyl-tRNA(Glu): step 1/2.</text>
</comment>
<comment type="subunit">
    <text evidence="1">Homodimer.</text>
</comment>
<comment type="domain">
    <text evidence="1">Possesses an unusual extended V-shaped dimeric structure with each monomer consisting of three distinct domains arranged along a curved 'spinal' alpha-helix. The N-terminal catalytic domain specifically recognizes the glutamate moiety of the substrate. The second domain is the NADPH-binding domain, and the third C-terminal domain is responsible for dimerization.</text>
</comment>
<comment type="miscellaneous">
    <text evidence="1">During catalysis, the active site Cys acts as a nucleophile attacking the alpha-carbonyl group of tRNA-bound glutamate with the formation of a thioester intermediate between enzyme and glutamate, and the concomitant release of tRNA(Glu). The thioester intermediate is finally reduced by direct hydride transfer from NADPH, to form the product GSA.</text>
</comment>
<comment type="similarity">
    <text evidence="1">Belongs to the glutamyl-tRNA reductase family.</text>
</comment>
<name>HEM1_PSYCK</name>
<feature type="chain" id="PRO_1000004677" description="Glutamyl-tRNA reductase">
    <location>
        <begin position="1"/>
        <end position="464"/>
    </location>
</feature>
<feature type="active site" description="Nucleophile" evidence="1">
    <location>
        <position position="48"/>
    </location>
</feature>
<feature type="binding site" evidence="1">
    <location>
        <begin position="47"/>
        <end position="50"/>
    </location>
    <ligand>
        <name>substrate</name>
    </ligand>
</feature>
<feature type="binding site" evidence="1">
    <location>
        <position position="145"/>
    </location>
    <ligand>
        <name>substrate</name>
    </ligand>
</feature>
<feature type="binding site" evidence="1">
    <location>
        <begin position="150"/>
        <end position="152"/>
    </location>
    <ligand>
        <name>substrate</name>
    </ligand>
</feature>
<feature type="binding site" evidence="1">
    <location>
        <position position="156"/>
    </location>
    <ligand>
        <name>substrate</name>
    </ligand>
</feature>
<feature type="binding site" evidence="1">
    <location>
        <begin position="225"/>
        <end position="230"/>
    </location>
    <ligand>
        <name>NADP(+)</name>
        <dbReference type="ChEBI" id="CHEBI:58349"/>
    </ligand>
</feature>
<feature type="site" description="Important for activity" evidence="1">
    <location>
        <position position="135"/>
    </location>
</feature>
<accession>Q1QED0</accession>
<protein>
    <recommendedName>
        <fullName evidence="1">Glutamyl-tRNA reductase</fullName>
        <shortName evidence="1">GluTR</shortName>
        <ecNumber evidence="1">1.2.1.70</ecNumber>
    </recommendedName>
</protein>
<dbReference type="EC" id="1.2.1.70" evidence="1"/>
<dbReference type="EMBL" id="CP000323">
    <property type="protein sequence ID" value="ABE73973.1"/>
    <property type="molecule type" value="Genomic_DNA"/>
</dbReference>
<dbReference type="RefSeq" id="WP_011512562.1">
    <property type="nucleotide sequence ID" value="NC_007969.1"/>
</dbReference>
<dbReference type="SMR" id="Q1QED0"/>
<dbReference type="STRING" id="335284.Pcryo_0189"/>
<dbReference type="KEGG" id="pcr:Pcryo_0189"/>
<dbReference type="eggNOG" id="COG0373">
    <property type="taxonomic scope" value="Bacteria"/>
</dbReference>
<dbReference type="HOGENOM" id="CLU_035113_2_2_6"/>
<dbReference type="UniPathway" id="UPA00251">
    <property type="reaction ID" value="UER00316"/>
</dbReference>
<dbReference type="Proteomes" id="UP000002425">
    <property type="component" value="Chromosome"/>
</dbReference>
<dbReference type="GO" id="GO:0008883">
    <property type="term" value="F:glutamyl-tRNA reductase activity"/>
    <property type="evidence" value="ECO:0007669"/>
    <property type="project" value="UniProtKB-UniRule"/>
</dbReference>
<dbReference type="GO" id="GO:0050661">
    <property type="term" value="F:NADP binding"/>
    <property type="evidence" value="ECO:0007669"/>
    <property type="project" value="InterPro"/>
</dbReference>
<dbReference type="GO" id="GO:0019353">
    <property type="term" value="P:protoporphyrinogen IX biosynthetic process from glutamate"/>
    <property type="evidence" value="ECO:0007669"/>
    <property type="project" value="TreeGrafter"/>
</dbReference>
<dbReference type="CDD" id="cd05213">
    <property type="entry name" value="NAD_bind_Glutamyl_tRNA_reduct"/>
    <property type="match status" value="1"/>
</dbReference>
<dbReference type="FunFam" id="3.40.50.720:FF:000031">
    <property type="entry name" value="Glutamyl-tRNA reductase"/>
    <property type="match status" value="1"/>
</dbReference>
<dbReference type="Gene3D" id="3.30.460.30">
    <property type="entry name" value="Glutamyl-tRNA reductase, N-terminal domain"/>
    <property type="match status" value="1"/>
</dbReference>
<dbReference type="Gene3D" id="3.40.50.720">
    <property type="entry name" value="NAD(P)-binding Rossmann-like Domain"/>
    <property type="match status" value="1"/>
</dbReference>
<dbReference type="HAMAP" id="MF_00087">
    <property type="entry name" value="Glu_tRNA_reductase"/>
    <property type="match status" value="1"/>
</dbReference>
<dbReference type="InterPro" id="IPR000343">
    <property type="entry name" value="4pyrrol_synth_GluRdtase"/>
</dbReference>
<dbReference type="InterPro" id="IPR015896">
    <property type="entry name" value="4pyrrol_synth_GluRdtase_dimer"/>
</dbReference>
<dbReference type="InterPro" id="IPR015895">
    <property type="entry name" value="4pyrrol_synth_GluRdtase_N"/>
</dbReference>
<dbReference type="InterPro" id="IPR036453">
    <property type="entry name" value="GluRdtase_dimer_dom_sf"/>
</dbReference>
<dbReference type="InterPro" id="IPR036343">
    <property type="entry name" value="GluRdtase_N_sf"/>
</dbReference>
<dbReference type="InterPro" id="IPR036291">
    <property type="entry name" value="NAD(P)-bd_dom_sf"/>
</dbReference>
<dbReference type="InterPro" id="IPR006151">
    <property type="entry name" value="Shikm_DH/Glu-tRNA_Rdtase"/>
</dbReference>
<dbReference type="NCBIfam" id="TIGR01035">
    <property type="entry name" value="hemA"/>
    <property type="match status" value="1"/>
</dbReference>
<dbReference type="PANTHER" id="PTHR43013">
    <property type="entry name" value="GLUTAMYL-TRNA REDUCTASE"/>
    <property type="match status" value="1"/>
</dbReference>
<dbReference type="PANTHER" id="PTHR43013:SF1">
    <property type="entry name" value="GLUTAMYL-TRNA REDUCTASE"/>
    <property type="match status" value="1"/>
</dbReference>
<dbReference type="Pfam" id="PF00745">
    <property type="entry name" value="GlutR_dimer"/>
    <property type="match status" value="1"/>
</dbReference>
<dbReference type="Pfam" id="PF05201">
    <property type="entry name" value="GlutR_N"/>
    <property type="match status" value="1"/>
</dbReference>
<dbReference type="Pfam" id="PF01488">
    <property type="entry name" value="Shikimate_DH"/>
    <property type="match status" value="1"/>
</dbReference>
<dbReference type="PIRSF" id="PIRSF000445">
    <property type="entry name" value="4pyrrol_synth_GluRdtase"/>
    <property type="match status" value="1"/>
</dbReference>
<dbReference type="SUPFAM" id="SSF69742">
    <property type="entry name" value="Glutamyl tRNA-reductase catalytic, N-terminal domain"/>
    <property type="match status" value="1"/>
</dbReference>
<dbReference type="SUPFAM" id="SSF69075">
    <property type="entry name" value="Glutamyl tRNA-reductase dimerization domain"/>
    <property type="match status" value="1"/>
</dbReference>
<dbReference type="SUPFAM" id="SSF51735">
    <property type="entry name" value="NAD(P)-binding Rossmann-fold domains"/>
    <property type="match status" value="1"/>
</dbReference>
<sequence length="464" mass="51284">MRLVVIGVNHKTAPVALRERLALVGDEVSIALAQLQGFSDGSVIVSTCNRTEIYALVPESILSPHTLLPNSASAVVETSVIESSMTANNSANLSSTIISAHILKIKTWLAGFKQLSLDEIDPYLYVHRNTHALTHWLRVAAGLDSMILGEPQILGQIKRAVHMAQDQKALSNQLGWIVDQVFAAAKRVRNETQVGAQAVSLSYAAAKLVTQIFDDLPSRTLLVVAAGEMNRLVATHIAGLGVGRVIICNRNPERAEALAAELRNPNRRIEVRTLQELPQVLAEADIVSSCSGSMDILIDKTMTLRALKSRRYQPMLMIDLAVPRDIDSTVSRIDDVYLYSVDDLQHVIAGNIEQRRQAAVDAELLVSQLVVEMDRRFQVRQVGKDIQQYRTRTHEQVNKLLQASIAELHGDSANPEDIMIELTRRLTQNLTHAPSKLMRKAAREGDNELLDFVVSGLQDAHRNH</sequence>
<reference key="1">
    <citation type="submission" date="2006-03" db="EMBL/GenBank/DDBJ databases">
        <title>Complete sequence of chromosome of Psychrobacter cryohalolentis K5.</title>
        <authorList>
            <consortium name="US DOE Joint Genome Institute"/>
            <person name="Copeland A."/>
            <person name="Lucas S."/>
            <person name="Lapidus A."/>
            <person name="Barry K."/>
            <person name="Detter J.C."/>
            <person name="Glavina T."/>
            <person name="Hammon N."/>
            <person name="Israni S."/>
            <person name="Dalin E."/>
            <person name="Tice H."/>
            <person name="Pitluck S."/>
            <person name="Brettin T."/>
            <person name="Bruce D."/>
            <person name="Han C."/>
            <person name="Tapia R."/>
            <person name="Sims D.R."/>
            <person name="Gilna P."/>
            <person name="Schmutz J."/>
            <person name="Larimer F."/>
            <person name="Land M."/>
            <person name="Hauser L."/>
            <person name="Kyrpides N."/>
            <person name="Kim E."/>
            <person name="Richardson P."/>
        </authorList>
    </citation>
    <scope>NUCLEOTIDE SEQUENCE [LARGE SCALE GENOMIC DNA]</scope>
    <source>
        <strain>ATCC BAA-1226 / DSM 17306 / VKM B-2378 / K5</strain>
    </source>
</reference>